<organism>
    <name type="scientific">Pisum sativum</name>
    <name type="common">Garden pea</name>
    <name type="synonym">Lathyrus oleraceus</name>
    <dbReference type="NCBI Taxonomy" id="3888"/>
    <lineage>
        <taxon>Eukaryota</taxon>
        <taxon>Viridiplantae</taxon>
        <taxon>Streptophyta</taxon>
        <taxon>Embryophyta</taxon>
        <taxon>Tracheophyta</taxon>
        <taxon>Spermatophyta</taxon>
        <taxon>Magnoliopsida</taxon>
        <taxon>eudicotyledons</taxon>
        <taxon>Gunneridae</taxon>
        <taxon>Pentapetalae</taxon>
        <taxon>rosids</taxon>
        <taxon>fabids</taxon>
        <taxon>Fabales</taxon>
        <taxon>Fabaceae</taxon>
        <taxon>Papilionoideae</taxon>
        <taxon>50 kb inversion clade</taxon>
        <taxon>NPAAA clade</taxon>
        <taxon>Hologalegina</taxon>
        <taxon>IRL clade</taxon>
        <taxon>Fabeae</taxon>
        <taxon>Pisum</taxon>
    </lineage>
</organism>
<gene>
    <name type="primary">UNI</name>
</gene>
<dbReference type="EMBL" id="AF035163">
    <property type="protein sequence ID" value="AAB88139.1"/>
    <property type="molecule type" value="Genomic_DNA"/>
</dbReference>
<dbReference type="EMBL" id="AF010190">
    <property type="protein sequence ID" value="AAC49782.1"/>
    <property type="molecule type" value="mRNA"/>
</dbReference>
<dbReference type="PIR" id="T06247">
    <property type="entry name" value="T06247"/>
</dbReference>
<dbReference type="PIR" id="T06372">
    <property type="entry name" value="T06372"/>
</dbReference>
<dbReference type="SMR" id="O48559"/>
<dbReference type="GO" id="GO:0005634">
    <property type="term" value="C:nucleus"/>
    <property type="evidence" value="ECO:0007669"/>
    <property type="project" value="UniProtKB-SubCell"/>
</dbReference>
<dbReference type="GO" id="GO:0003677">
    <property type="term" value="F:DNA binding"/>
    <property type="evidence" value="ECO:0007669"/>
    <property type="project" value="UniProtKB-KW"/>
</dbReference>
<dbReference type="GO" id="GO:0006355">
    <property type="term" value="P:regulation of DNA-templated transcription"/>
    <property type="evidence" value="ECO:0007669"/>
    <property type="project" value="InterPro"/>
</dbReference>
<dbReference type="Gene3D" id="1.10.4180.10">
    <property type="entry name" value="Protein LEAFY"/>
    <property type="match status" value="1"/>
</dbReference>
<dbReference type="InterPro" id="IPR035209">
    <property type="entry name" value="FLO/LFY_C"/>
</dbReference>
<dbReference type="InterPro" id="IPR002910">
    <property type="entry name" value="FLO_LFY"/>
</dbReference>
<dbReference type="InterPro" id="IPR038276">
    <property type="entry name" value="Floricaula/leafy_C_sf"/>
</dbReference>
<dbReference type="InterPro" id="IPR035079">
    <property type="entry name" value="LFY_SAM"/>
</dbReference>
<dbReference type="PANTHER" id="PTHR36079">
    <property type="entry name" value="PROTEIN LEAFY"/>
    <property type="match status" value="1"/>
</dbReference>
<dbReference type="PANTHER" id="PTHR36079:SF1">
    <property type="entry name" value="PROTEIN LEAFY"/>
    <property type="match status" value="1"/>
</dbReference>
<dbReference type="Pfam" id="PF17538">
    <property type="entry name" value="C_LFY_FLO"/>
    <property type="match status" value="1"/>
</dbReference>
<dbReference type="Pfam" id="PF01698">
    <property type="entry name" value="SAM_LFY"/>
    <property type="match status" value="1"/>
</dbReference>
<proteinExistence type="evidence at transcript level"/>
<protein>
    <recommendedName>
        <fullName>Protein UNIFOLIATA</fullName>
    </recommendedName>
</protein>
<reference key="1">
    <citation type="journal article" date="1997" name="Curr. Biol.">
        <title>UNIFOLIATA regulates leaf and flower morphogenesis in pea.</title>
        <authorList>
            <person name="Hofer J.M.I."/>
            <person name="Turner L."/>
            <person name="Hellens R.P."/>
            <person name="Ambrose M."/>
            <person name="Matthews P."/>
            <person name="Michael A.J."/>
            <person name="Ellis T.H.N."/>
        </authorList>
    </citation>
    <scope>NUCLEOTIDE SEQUENCE [GENOMIC DNA / MRNA]</scope>
    <source>
        <strain>cv. JI 2171</strain>
    </source>
</reference>
<evidence type="ECO:0000250" key="1"/>
<evidence type="ECO:0000256" key="2">
    <source>
        <dbReference type="SAM" id="MobiDB-lite"/>
    </source>
</evidence>
<evidence type="ECO:0000305" key="3"/>
<feature type="chain" id="PRO_0000129151" description="Protein UNIFOLIATA">
    <location>
        <begin position="1"/>
        <end position="395"/>
    </location>
</feature>
<feature type="DNA-binding region" evidence="1">
    <location>
        <begin position="224"/>
        <end position="228"/>
    </location>
</feature>
<feature type="DNA-binding region" evidence="1">
    <location>
        <begin position="293"/>
        <end position="300"/>
    </location>
</feature>
<feature type="DNA-binding region" evidence="1">
    <location>
        <begin position="364"/>
        <end position="367"/>
    </location>
</feature>
<feature type="region of interest" description="Disordered" evidence="2">
    <location>
        <begin position="147"/>
        <end position="170"/>
    </location>
</feature>
<feature type="region of interest" description="Disordered" evidence="2">
    <location>
        <begin position="185"/>
        <end position="223"/>
    </location>
</feature>
<feature type="compositionally biased region" description="Acidic residues" evidence="2">
    <location>
        <begin position="202"/>
        <end position="211"/>
    </location>
</feature>
<feature type="site" description="Interaction with DNA" evidence="1">
    <location>
        <position position="271"/>
    </location>
</feature>
<feature type="site" description="Interaction with DNA" evidence="1">
    <location>
        <position position="278"/>
    </location>
</feature>
<feature type="site" description="Interaction with DNA" evidence="1">
    <location>
        <position position="282"/>
    </location>
</feature>
<feature type="site" description="Interaction with DNA" evidence="1">
    <location>
        <position position="329"/>
    </location>
</feature>
<feature type="sequence conflict" description="In Ref. 1; AAC49782." evidence="3" ref="1">
    <original>A</original>
    <variation>G</variation>
    <location>
        <position position="234"/>
    </location>
</feature>
<feature type="sequence conflict" description="In Ref. 1; AAC49782." evidence="3" ref="1">
    <original>G</original>
    <variation>V</variation>
    <location>
        <position position="365"/>
    </location>
</feature>
<feature type="sequence conflict" description="In Ref. 1; AAC49782." evidence="3" ref="1">
    <original>F</original>
    <variation>V</variation>
    <location>
        <position position="388"/>
    </location>
</feature>
<keyword id="KW-0010">Activator</keyword>
<keyword id="KW-0217">Developmental protein</keyword>
<keyword id="KW-0238">DNA-binding</keyword>
<keyword id="KW-0539">Nucleus</keyword>
<keyword id="KW-0804">Transcription</keyword>
<keyword id="KW-0805">Transcription regulation</keyword>
<name>UNI_PEA</name>
<accession>O48559</accession>
<accession>O22379</accession>
<comment type="function">
    <text>May regulate indeterminacy during leaf and flower development.</text>
</comment>
<comment type="subcellular location">
    <subcellularLocation>
        <location evidence="3">Nucleus</location>
    </subcellularLocation>
</comment>
<comment type="tissue specificity">
    <text>Highly expressed in leaf, leaflet, inflorescence and lateral shoot primordia on the main shoot axis, and in floral organ and carpel primordia.</text>
</comment>
<comment type="similarity">
    <text evidence="3">Belongs to the FLO/LFY family.</text>
</comment>
<sequence length="395" mass="44740">MDPDAFTASLFKWDPRTVLSTAPSPRPQLLDYAVTPTTAPMTYHPARLPRELGGLEELFQAYGIRYYTAAKIAELGFTVSTLVDMKDDELDDMMNSLSQIFRWDLLVGERYGIKAAIRAERRRLDEEEIKRRGLLSGDTTNALDALSQEGLSEEPVVQREKEAMGSGGGSTWEVAVVEERRKRQQIRRRRMKMKGNDHGENEEGEEEEEDNISGGGVGGGERQREHPFIVTEPAEVARGKKNGLDYLFHLYEQCREFLIQVQAIAKERGEKCPTKVTNQVFRYAKKAGASYINKPKMRHYVHCYALHCLDEEVSNELRRGFKERGENVGAWRQACYKPLVAIAARQGWDIDAIFNAHPRLSIWYGPTKLRQLCHAERNGAAASSSVSFGTTHLPF</sequence>